<reference key="1">
    <citation type="journal article" date="2003" name="Proc. Natl. Acad. Sci. U.S.A.">
        <title>Complete genome sequence of the marine planctomycete Pirellula sp. strain 1.</title>
        <authorList>
            <person name="Gloeckner F.O."/>
            <person name="Kube M."/>
            <person name="Bauer M."/>
            <person name="Teeling H."/>
            <person name="Lombardot T."/>
            <person name="Ludwig W."/>
            <person name="Gade D."/>
            <person name="Beck A."/>
            <person name="Borzym K."/>
            <person name="Heitmann K."/>
            <person name="Rabus R."/>
            <person name="Schlesner H."/>
            <person name="Amann R."/>
            <person name="Reinhardt R."/>
        </authorList>
    </citation>
    <scope>NUCLEOTIDE SEQUENCE [LARGE SCALE GENOMIC DNA]</scope>
    <source>
        <strain>DSM 10527 / NCIMB 13988 / SH1</strain>
    </source>
</reference>
<proteinExistence type="inferred from homology"/>
<gene>
    <name evidence="1" type="primary">rplX</name>
    <name type="ordered locus">RB7851</name>
</gene>
<accession>Q7UN09</accession>
<comment type="function">
    <text evidence="1">One of two assembly initiator proteins, it binds directly to the 5'-end of the 23S rRNA, where it nucleates assembly of the 50S subunit.</text>
</comment>
<comment type="function">
    <text evidence="1">One of the proteins that surrounds the polypeptide exit tunnel on the outside of the subunit.</text>
</comment>
<comment type="subunit">
    <text evidence="1">Part of the 50S ribosomal subunit.</text>
</comment>
<comment type="similarity">
    <text evidence="1">Belongs to the universal ribosomal protein uL24 family.</text>
</comment>
<protein>
    <recommendedName>
        <fullName evidence="1">Large ribosomal subunit protein uL24</fullName>
    </recommendedName>
    <alternativeName>
        <fullName evidence="3">50S ribosomal protein L24</fullName>
    </alternativeName>
</protein>
<sequence length="115" mass="12484">MKFRVDDEVIVIAGADKGHRGKILKVDRDKDKVVVEGAARVWKHVRQSQKNPQGGRLNKEMPMSASNVMLVDPSTGKPTRIGVRYLEDGSKERFAKASGESLGQIAPAKASKAAS</sequence>
<dbReference type="EMBL" id="BX294146">
    <property type="protein sequence ID" value="CAD75610.1"/>
    <property type="molecule type" value="Genomic_DNA"/>
</dbReference>
<dbReference type="RefSeq" id="NP_868063.1">
    <property type="nucleotide sequence ID" value="NC_005027.1"/>
</dbReference>
<dbReference type="RefSeq" id="WP_007326807.1">
    <property type="nucleotide sequence ID" value="NC_005027.1"/>
</dbReference>
<dbReference type="SMR" id="Q7UN09"/>
<dbReference type="FunCoup" id="Q7UN09">
    <property type="interactions" value="555"/>
</dbReference>
<dbReference type="STRING" id="243090.RB7851"/>
<dbReference type="EnsemblBacteria" id="CAD75610">
    <property type="protein sequence ID" value="CAD75610"/>
    <property type="gene ID" value="RB7851"/>
</dbReference>
<dbReference type="KEGG" id="rba:RB7851"/>
<dbReference type="PATRIC" id="fig|243090.15.peg.3794"/>
<dbReference type="eggNOG" id="COG0198">
    <property type="taxonomic scope" value="Bacteria"/>
</dbReference>
<dbReference type="HOGENOM" id="CLU_093315_2_0_0"/>
<dbReference type="InParanoid" id="Q7UN09"/>
<dbReference type="OrthoDB" id="9807419at2"/>
<dbReference type="Proteomes" id="UP000001025">
    <property type="component" value="Chromosome"/>
</dbReference>
<dbReference type="GO" id="GO:0022625">
    <property type="term" value="C:cytosolic large ribosomal subunit"/>
    <property type="evidence" value="ECO:0000318"/>
    <property type="project" value="GO_Central"/>
</dbReference>
<dbReference type="GO" id="GO:0019843">
    <property type="term" value="F:rRNA binding"/>
    <property type="evidence" value="ECO:0007669"/>
    <property type="project" value="UniProtKB-UniRule"/>
</dbReference>
<dbReference type="GO" id="GO:0003735">
    <property type="term" value="F:structural constituent of ribosome"/>
    <property type="evidence" value="ECO:0007669"/>
    <property type="project" value="InterPro"/>
</dbReference>
<dbReference type="GO" id="GO:0006412">
    <property type="term" value="P:translation"/>
    <property type="evidence" value="ECO:0000318"/>
    <property type="project" value="GO_Central"/>
</dbReference>
<dbReference type="CDD" id="cd06089">
    <property type="entry name" value="KOW_RPL26"/>
    <property type="match status" value="1"/>
</dbReference>
<dbReference type="FunFam" id="2.30.30.30:FF:000098">
    <property type="entry name" value="50S ribosomal protein L24"/>
    <property type="match status" value="1"/>
</dbReference>
<dbReference type="Gene3D" id="2.30.30.30">
    <property type="match status" value="1"/>
</dbReference>
<dbReference type="HAMAP" id="MF_01326_B">
    <property type="entry name" value="Ribosomal_uL24_B"/>
    <property type="match status" value="1"/>
</dbReference>
<dbReference type="InterPro" id="IPR005824">
    <property type="entry name" value="KOW"/>
</dbReference>
<dbReference type="InterPro" id="IPR014722">
    <property type="entry name" value="Rib_uL2_dom2"/>
</dbReference>
<dbReference type="InterPro" id="IPR003256">
    <property type="entry name" value="Ribosomal_uL24"/>
</dbReference>
<dbReference type="InterPro" id="IPR005825">
    <property type="entry name" value="Ribosomal_uL24_CS"/>
</dbReference>
<dbReference type="InterPro" id="IPR041988">
    <property type="entry name" value="Ribosomal_uL24_KOW"/>
</dbReference>
<dbReference type="InterPro" id="IPR008991">
    <property type="entry name" value="Translation_prot_SH3-like_sf"/>
</dbReference>
<dbReference type="NCBIfam" id="TIGR01079">
    <property type="entry name" value="rplX_bact"/>
    <property type="match status" value="1"/>
</dbReference>
<dbReference type="PANTHER" id="PTHR12903">
    <property type="entry name" value="MITOCHONDRIAL RIBOSOMAL PROTEIN L24"/>
    <property type="match status" value="1"/>
</dbReference>
<dbReference type="Pfam" id="PF00467">
    <property type="entry name" value="KOW"/>
    <property type="match status" value="1"/>
</dbReference>
<dbReference type="Pfam" id="PF17136">
    <property type="entry name" value="ribosomal_L24"/>
    <property type="match status" value="1"/>
</dbReference>
<dbReference type="SMART" id="SM00739">
    <property type="entry name" value="KOW"/>
    <property type="match status" value="1"/>
</dbReference>
<dbReference type="SUPFAM" id="SSF50104">
    <property type="entry name" value="Translation proteins SH3-like domain"/>
    <property type="match status" value="1"/>
</dbReference>
<dbReference type="PROSITE" id="PS01108">
    <property type="entry name" value="RIBOSOMAL_L24"/>
    <property type="match status" value="1"/>
</dbReference>
<keyword id="KW-1185">Reference proteome</keyword>
<keyword id="KW-0687">Ribonucleoprotein</keyword>
<keyword id="KW-0689">Ribosomal protein</keyword>
<keyword id="KW-0694">RNA-binding</keyword>
<keyword id="KW-0699">rRNA-binding</keyword>
<organism>
    <name type="scientific">Rhodopirellula baltica (strain DSM 10527 / NCIMB 13988 / SH1)</name>
    <dbReference type="NCBI Taxonomy" id="243090"/>
    <lineage>
        <taxon>Bacteria</taxon>
        <taxon>Pseudomonadati</taxon>
        <taxon>Planctomycetota</taxon>
        <taxon>Planctomycetia</taxon>
        <taxon>Pirellulales</taxon>
        <taxon>Pirellulaceae</taxon>
        <taxon>Rhodopirellula</taxon>
    </lineage>
</organism>
<name>RL24_RHOBA</name>
<feature type="chain" id="PRO_0000130703" description="Large ribosomal subunit protein uL24">
    <location>
        <begin position="1"/>
        <end position="115"/>
    </location>
</feature>
<feature type="region of interest" description="Disordered" evidence="2">
    <location>
        <begin position="45"/>
        <end position="77"/>
    </location>
</feature>
<feature type="region of interest" description="Disordered" evidence="2">
    <location>
        <begin position="96"/>
        <end position="115"/>
    </location>
</feature>
<evidence type="ECO:0000255" key="1">
    <source>
        <dbReference type="HAMAP-Rule" id="MF_01326"/>
    </source>
</evidence>
<evidence type="ECO:0000256" key="2">
    <source>
        <dbReference type="SAM" id="MobiDB-lite"/>
    </source>
</evidence>
<evidence type="ECO:0000305" key="3"/>